<protein>
    <recommendedName>
        <fullName>Probable dipeptidyl-peptidase 5</fullName>
        <ecNumber>3.4.14.-</ecNumber>
    </recommendedName>
    <alternativeName>
        <fullName>Dipeptidyl-peptidase V</fullName>
        <shortName>DPP V</shortName>
        <shortName>DppV</shortName>
    </alternativeName>
</protein>
<name>DPP5_ASPTN</name>
<organism>
    <name type="scientific">Aspergillus terreus (strain NIH 2624 / FGSC A1156)</name>
    <dbReference type="NCBI Taxonomy" id="341663"/>
    <lineage>
        <taxon>Eukaryota</taxon>
        <taxon>Fungi</taxon>
        <taxon>Dikarya</taxon>
        <taxon>Ascomycota</taxon>
        <taxon>Pezizomycotina</taxon>
        <taxon>Eurotiomycetes</taxon>
        <taxon>Eurotiomycetidae</taxon>
        <taxon>Eurotiales</taxon>
        <taxon>Aspergillaceae</taxon>
        <taxon>Aspergillus</taxon>
        <taxon>Aspergillus subgen. Circumdati</taxon>
    </lineage>
</organism>
<accession>Q0C8V9</accession>
<feature type="signal peptide" evidence="2">
    <location>
        <begin position="1"/>
        <end position="19"/>
    </location>
</feature>
<feature type="chain" id="PRO_0000397820" description="Probable dipeptidyl-peptidase 5">
    <location>
        <begin position="20"/>
        <end position="723"/>
    </location>
</feature>
<feature type="active site" description="Charge relay system" evidence="1">
    <location>
        <position position="561"/>
    </location>
</feature>
<feature type="active site" description="Charge relay system" evidence="1">
    <location>
        <position position="644"/>
    </location>
</feature>
<feature type="active site" description="Charge relay system" evidence="1">
    <location>
        <position position="676"/>
    </location>
</feature>
<feature type="glycosylation site" description="N-linked (GlcNAc...) asparagine" evidence="2">
    <location>
        <position position="79"/>
    </location>
</feature>
<feature type="glycosylation site" description="N-linked (GlcNAc...) asparagine" evidence="2">
    <location>
        <position position="97"/>
    </location>
</feature>
<feature type="glycosylation site" description="N-linked (GlcNAc...) asparagine" evidence="2">
    <location>
        <position position="154"/>
    </location>
</feature>
<feature type="glycosylation site" description="N-linked (GlcNAc...) asparagine" evidence="2">
    <location>
        <position position="255"/>
    </location>
</feature>
<feature type="glycosylation site" description="N-linked (GlcNAc...) asparagine" evidence="2">
    <location>
        <position position="381"/>
    </location>
</feature>
<feature type="glycosylation site" description="N-linked (GlcNAc...) asparagine" evidence="2">
    <location>
        <position position="451"/>
    </location>
</feature>
<feature type="glycosylation site" description="N-linked (GlcNAc...) asparagine" evidence="2">
    <location>
        <position position="608"/>
    </location>
</feature>
<keyword id="KW-0031">Aminopeptidase</keyword>
<keyword id="KW-0325">Glycoprotein</keyword>
<keyword id="KW-0378">Hydrolase</keyword>
<keyword id="KW-0645">Protease</keyword>
<keyword id="KW-1185">Reference proteome</keyword>
<keyword id="KW-0964">Secreted</keyword>
<keyword id="KW-0720">Serine protease</keyword>
<keyword id="KW-0732">Signal</keyword>
<sequence length="723" mass="79627">MAALRWLSAVVAVSTTVLAITPEQMLSAPRRGEAIPNPSGNVALFSASQYSFDTKEKSSSWNLLNLKTGDITLLTDDANVSEIVWLGGDDTSLLYINGTNAEIPGGVELWVSSVKDFSKGYKAASLGASFSGLKAVRTRSGDIKFAVNAQSYANGTAYNEELATKYASTARIYDSIYVRHWDTYLTTTFNAVFAGTLKKGKHQYASAGPLKNLVAPVKNAESPYPPFGDSTDYDVSPDGKWVAFKSKAPDVPRANYTTAYIYLAPHDGSSTATPINGPDSPGTPEGVQGDANYPVFSPDSRHLAYFQMAHKSYESDRRVLYVYTLGSKTTTPAVAGDWNRSPDSAKWLDNKHLILGSEDHARVRLFGPVPIDADDDFKPQNFTDGGAVSSYHVLPDKTVLVTGTAIWTSWNVYTASPKKGVIKTIASANKIDPGLAGLGPEDISEFYYDGNWTKIQSWIIYPENFDSSKKYPLFFYIHGGPQSATPDSWSTRWNAKVFADQGYVVVAPNPTGSTGFGQELTDAIANNWGGAPYEDLVKAWEYVDKNLPYVDTENGVAAGASYGGFMINWIQGSDLGRKFKALVCHDGTFVADAKISTEELWFIEHDFNGTFWGARDNYRRWDPSAPERILQFSTPQLVIHSDQDYRLPVAEGLAMFNVLQERGVPSRFLNFPDENHWVLKQENSLVWHQQMLGWLNRYSGIEEANPDAVSLDDTIIPVVNYNP</sequence>
<comment type="function">
    <text evidence="1">Extracellular dipeptidyl-peptidase which removes N-terminal dipeptides sequentially from polypeptides having unsubstituted N-termini.</text>
</comment>
<comment type="subcellular location">
    <subcellularLocation>
        <location evidence="1">Secreted</location>
    </subcellularLocation>
</comment>
<comment type="similarity">
    <text evidence="3">Belongs to the peptidase S9C family.</text>
</comment>
<reference key="1">
    <citation type="submission" date="2005-09" db="EMBL/GenBank/DDBJ databases">
        <title>Annotation of the Aspergillus terreus NIH2624 genome.</title>
        <authorList>
            <person name="Birren B.W."/>
            <person name="Lander E.S."/>
            <person name="Galagan J.E."/>
            <person name="Nusbaum C."/>
            <person name="Devon K."/>
            <person name="Henn M."/>
            <person name="Ma L.-J."/>
            <person name="Jaffe D.B."/>
            <person name="Butler J."/>
            <person name="Alvarez P."/>
            <person name="Gnerre S."/>
            <person name="Grabherr M."/>
            <person name="Kleber M."/>
            <person name="Mauceli E.W."/>
            <person name="Brockman W."/>
            <person name="Rounsley S."/>
            <person name="Young S.K."/>
            <person name="LaButti K."/>
            <person name="Pushparaj V."/>
            <person name="DeCaprio D."/>
            <person name="Crawford M."/>
            <person name="Koehrsen M."/>
            <person name="Engels R."/>
            <person name="Montgomery P."/>
            <person name="Pearson M."/>
            <person name="Howarth C."/>
            <person name="Larson L."/>
            <person name="Luoma S."/>
            <person name="White J."/>
            <person name="Alvarado L."/>
            <person name="Kodira C.D."/>
            <person name="Zeng Q."/>
            <person name="Oleary S."/>
            <person name="Yandava C."/>
            <person name="Denning D.W."/>
            <person name="Nierman W.C."/>
            <person name="Milne T."/>
            <person name="Madden K."/>
        </authorList>
    </citation>
    <scope>NUCLEOTIDE SEQUENCE [LARGE SCALE GENOMIC DNA]</scope>
    <source>
        <strain>NIH 2624 / FGSC A1156</strain>
    </source>
</reference>
<gene>
    <name type="primary">dpp5</name>
    <name type="ORF">ATEG_09875</name>
</gene>
<evidence type="ECO:0000250" key="1"/>
<evidence type="ECO:0000255" key="2"/>
<evidence type="ECO:0000305" key="3"/>
<proteinExistence type="inferred from homology"/>
<dbReference type="EC" id="3.4.14.-"/>
<dbReference type="EMBL" id="CH476608">
    <property type="protein sequence ID" value="EAU30066.1"/>
    <property type="molecule type" value="Genomic_DNA"/>
</dbReference>
<dbReference type="RefSeq" id="XP_001218497.1">
    <property type="nucleotide sequence ID" value="XM_001218496.1"/>
</dbReference>
<dbReference type="SMR" id="Q0C8V9"/>
<dbReference type="STRING" id="341663.Q0C8V9"/>
<dbReference type="ESTHER" id="asptn-dpp5">
    <property type="family name" value="Prolyl_oligopeptidase_S9"/>
</dbReference>
<dbReference type="MEROPS" id="S09.012"/>
<dbReference type="GlyCosmos" id="Q0C8V9">
    <property type="glycosylation" value="7 sites, No reported glycans"/>
</dbReference>
<dbReference type="EnsemblFungi" id="EAU30066">
    <property type="protein sequence ID" value="EAU30066"/>
    <property type="gene ID" value="ATEG_09875"/>
</dbReference>
<dbReference type="GeneID" id="4354286"/>
<dbReference type="VEuPathDB" id="FungiDB:ATEG_09875"/>
<dbReference type="eggNOG" id="KOG2100">
    <property type="taxonomic scope" value="Eukaryota"/>
</dbReference>
<dbReference type="HOGENOM" id="CLU_008615_0_1_1"/>
<dbReference type="OMA" id="YPVRYWD"/>
<dbReference type="OrthoDB" id="416344at2759"/>
<dbReference type="Proteomes" id="UP000007963">
    <property type="component" value="Unassembled WGS sequence"/>
</dbReference>
<dbReference type="GO" id="GO:0005576">
    <property type="term" value="C:extracellular region"/>
    <property type="evidence" value="ECO:0007669"/>
    <property type="project" value="UniProtKB-SubCell"/>
</dbReference>
<dbReference type="GO" id="GO:0004177">
    <property type="term" value="F:aminopeptidase activity"/>
    <property type="evidence" value="ECO:0007669"/>
    <property type="project" value="UniProtKB-KW"/>
</dbReference>
<dbReference type="GO" id="GO:0004252">
    <property type="term" value="F:serine-type endopeptidase activity"/>
    <property type="evidence" value="ECO:0007669"/>
    <property type="project" value="TreeGrafter"/>
</dbReference>
<dbReference type="GO" id="GO:0006508">
    <property type="term" value="P:proteolysis"/>
    <property type="evidence" value="ECO:0007669"/>
    <property type="project" value="UniProtKB-KW"/>
</dbReference>
<dbReference type="FunFam" id="2.120.10.30:FF:000109">
    <property type="entry name" value="Dipeptidyl-peptidase 5"/>
    <property type="match status" value="1"/>
</dbReference>
<dbReference type="FunFam" id="3.40.50.1820:FF:000028">
    <property type="entry name" value="S9 family peptidase"/>
    <property type="match status" value="1"/>
</dbReference>
<dbReference type="Gene3D" id="3.40.50.1820">
    <property type="entry name" value="alpha/beta hydrolase"/>
    <property type="match status" value="1"/>
</dbReference>
<dbReference type="Gene3D" id="2.120.10.30">
    <property type="entry name" value="TolB, C-terminal domain"/>
    <property type="match status" value="1"/>
</dbReference>
<dbReference type="InterPro" id="IPR011042">
    <property type="entry name" value="6-blade_b-propeller_TolB-like"/>
</dbReference>
<dbReference type="InterPro" id="IPR029058">
    <property type="entry name" value="AB_hydrolase_fold"/>
</dbReference>
<dbReference type="InterPro" id="IPR001375">
    <property type="entry name" value="Peptidase_S9_cat"/>
</dbReference>
<dbReference type="PANTHER" id="PTHR42776:SF11">
    <property type="entry name" value="DIPEPTIDYL-PEPTIDASE 5-RELATED"/>
    <property type="match status" value="1"/>
</dbReference>
<dbReference type="PANTHER" id="PTHR42776">
    <property type="entry name" value="SERINE PEPTIDASE S9 FAMILY MEMBER"/>
    <property type="match status" value="1"/>
</dbReference>
<dbReference type="Pfam" id="PF00326">
    <property type="entry name" value="Peptidase_S9"/>
    <property type="match status" value="1"/>
</dbReference>
<dbReference type="SUPFAM" id="SSF53474">
    <property type="entry name" value="alpha/beta-Hydrolases"/>
    <property type="match status" value="1"/>
</dbReference>
<dbReference type="SUPFAM" id="SSF82171">
    <property type="entry name" value="DPP6 N-terminal domain-like"/>
    <property type="match status" value="1"/>
</dbReference>